<gene>
    <name type="primary">sotA</name>
</gene>
<organism>
    <name type="scientific">Dickeya chrysanthemi</name>
    <name type="common">Pectobacterium chrysanthemi</name>
    <name type="synonym">Erwinia chrysanthemi</name>
    <dbReference type="NCBI Taxonomy" id="556"/>
    <lineage>
        <taxon>Bacteria</taxon>
        <taxon>Pseudomonadati</taxon>
        <taxon>Pseudomonadota</taxon>
        <taxon>Gammaproteobacteria</taxon>
        <taxon>Enterobacterales</taxon>
        <taxon>Pectobacteriaceae</taxon>
        <taxon>Dickeya</taxon>
    </lineage>
</organism>
<sequence>MTISSARTARRLPDLTSSAFLVIAFLTGIAGALQLPTLSLFLSTEVQVRPFMVGLFYTGSAVIGIVVSQILATYSDRQGDRKTLILQCCLLGALACLLYAWNRNYFVLLFIGVLLSSFGSTANPQLFALAREHADRTGRGAAMFSSVMRAQISLSWVIGPPVAFALALGFGFPAMYLTAAVVFVLCGLLVWLLLPSMPKTRVKSAATLESPRQNRRDTLLLFTACTLMWTCNGIYLINMPLYLVNELRLPEKLAGVMMGTAAGLEIPVMLLAGYLTSRLGKRLLMRLAVIAGLIFYTGLTLLNGSWALLALQLLNAIFIGILAGMGMLYFQDLMPGQAGAATTLFTNTTRVGWIISGSLAGIVAEVWSYHAGFVIAIAMLAGAAVCMWRIRDV</sequence>
<reference key="1">
    <citation type="journal article" date="2000" name="J. Bacteriol.">
        <title>Characterization of SotA and SotB, two Erwinia chrysanthemi proteins which modify isopropyl-beta-D-thiogalactopyranoside and lactose induction of the Escherichia coli lac promoter.</title>
        <authorList>
            <person name="Condemine G."/>
        </authorList>
    </citation>
    <scope>NUCLEOTIDE SEQUENCE [GENOMIC DNA]</scope>
    <scope>CHARACTERIZATION</scope>
    <source>
        <strain>A350</strain>
    </source>
</reference>
<feature type="chain" id="PRO_0000209363" description="Sugar efflux transporter A">
    <location>
        <begin position="1"/>
        <end position="393"/>
    </location>
</feature>
<feature type="transmembrane region" description="Helical" evidence="1">
    <location>
        <begin position="22"/>
        <end position="42"/>
    </location>
</feature>
<feature type="transmembrane region" description="Helical" evidence="1">
    <location>
        <begin position="51"/>
        <end position="71"/>
    </location>
</feature>
<feature type="transmembrane region" description="Helical" evidence="1">
    <location>
        <begin position="82"/>
        <end position="102"/>
    </location>
</feature>
<feature type="transmembrane region" description="Helical" evidence="1">
    <location>
        <begin position="107"/>
        <end position="127"/>
    </location>
</feature>
<feature type="transmembrane region" description="Helical" evidence="1">
    <location>
        <begin position="152"/>
        <end position="172"/>
    </location>
</feature>
<feature type="transmembrane region" description="Helical" evidence="1">
    <location>
        <begin position="174"/>
        <end position="194"/>
    </location>
</feature>
<feature type="transmembrane region" description="Helical" evidence="1">
    <location>
        <begin position="219"/>
        <end position="239"/>
    </location>
</feature>
<feature type="transmembrane region" description="Helical" evidence="1">
    <location>
        <begin position="253"/>
        <end position="273"/>
    </location>
</feature>
<feature type="transmembrane region" description="Helical" evidence="1">
    <location>
        <begin position="287"/>
        <end position="307"/>
    </location>
</feature>
<feature type="transmembrane region" description="Helical" evidence="1">
    <location>
        <begin position="308"/>
        <end position="328"/>
    </location>
</feature>
<feature type="transmembrane region" description="Helical" evidence="1">
    <location>
        <begin position="344"/>
        <end position="364"/>
    </location>
</feature>
<feature type="transmembrane region" description="Helical" evidence="1">
    <location>
        <begin position="366"/>
        <end position="386"/>
    </location>
</feature>
<dbReference type="EMBL" id="AJ249180">
    <property type="protein sequence ID" value="CAB53452.1"/>
    <property type="molecule type" value="Genomic_DNA"/>
</dbReference>
<dbReference type="SMR" id="Q9S3K0"/>
<dbReference type="TCDB" id="2.A.1.20.4">
    <property type="family name" value="the major facilitator superfamily (mfs)"/>
</dbReference>
<dbReference type="GO" id="GO:0005886">
    <property type="term" value="C:plasma membrane"/>
    <property type="evidence" value="ECO:0007669"/>
    <property type="project" value="UniProtKB-SubCell"/>
</dbReference>
<dbReference type="GO" id="GO:0005351">
    <property type="term" value="F:carbohydrate:proton symporter activity"/>
    <property type="evidence" value="ECO:0007669"/>
    <property type="project" value="InterPro"/>
</dbReference>
<dbReference type="GO" id="GO:0036448">
    <property type="term" value="P:cellular response to glucose-phosphate stress"/>
    <property type="evidence" value="ECO:0007669"/>
    <property type="project" value="TreeGrafter"/>
</dbReference>
<dbReference type="GO" id="GO:1904659">
    <property type="term" value="P:D-glucose transmembrane transport"/>
    <property type="evidence" value="ECO:0007669"/>
    <property type="project" value="TreeGrafter"/>
</dbReference>
<dbReference type="GO" id="GO:0015767">
    <property type="term" value="P:lactose transport"/>
    <property type="evidence" value="ECO:0007669"/>
    <property type="project" value="TreeGrafter"/>
</dbReference>
<dbReference type="CDD" id="cd17471">
    <property type="entry name" value="MFS_Set"/>
    <property type="match status" value="1"/>
</dbReference>
<dbReference type="FunFam" id="1.20.1250.20:FF:000125">
    <property type="entry name" value="Sugar efflux transporter SetB"/>
    <property type="match status" value="1"/>
</dbReference>
<dbReference type="FunFam" id="1.20.1250.20:FF:000151">
    <property type="entry name" value="Sugar efflux transporter SetB"/>
    <property type="match status" value="1"/>
</dbReference>
<dbReference type="Gene3D" id="1.20.1250.20">
    <property type="entry name" value="MFS general substrate transporter like domains"/>
    <property type="match status" value="2"/>
</dbReference>
<dbReference type="InterPro" id="IPR011701">
    <property type="entry name" value="MFS"/>
</dbReference>
<dbReference type="InterPro" id="IPR020846">
    <property type="entry name" value="MFS_dom"/>
</dbReference>
<dbReference type="InterPro" id="IPR036259">
    <property type="entry name" value="MFS_trans_sf"/>
</dbReference>
<dbReference type="InterPro" id="IPR004750">
    <property type="entry name" value="Sugar_efflux"/>
</dbReference>
<dbReference type="NCBIfam" id="TIGR00899">
    <property type="entry name" value="2A0120"/>
    <property type="match status" value="1"/>
</dbReference>
<dbReference type="PANTHER" id="PTHR23535">
    <property type="entry name" value="SUGAR EFFLUX TRANSPORTER A-RELATED"/>
    <property type="match status" value="1"/>
</dbReference>
<dbReference type="PANTHER" id="PTHR23535:SF2">
    <property type="entry name" value="SUGAR EFFLUX TRANSPORTER A-RELATED"/>
    <property type="match status" value="1"/>
</dbReference>
<dbReference type="Pfam" id="PF07690">
    <property type="entry name" value="MFS_1"/>
    <property type="match status" value="1"/>
</dbReference>
<dbReference type="SUPFAM" id="SSF103473">
    <property type="entry name" value="MFS general substrate transporter"/>
    <property type="match status" value="1"/>
</dbReference>
<dbReference type="PROSITE" id="PS50850">
    <property type="entry name" value="MFS"/>
    <property type="match status" value="1"/>
</dbReference>
<comment type="function">
    <text>Involved in the efflux of sugars. The physiological role may be the reduction of the intracellular concentration of toxic sugars or sugar metabolites. Transports IPTG, lactose and arabinose.</text>
</comment>
<comment type="subcellular location">
    <subcellularLocation>
        <location evidence="2">Cell inner membrane</location>
        <topology evidence="2">Multi-pass membrane protein</topology>
    </subcellularLocation>
</comment>
<comment type="induction">
    <text>Activated by cyclic AMP receptor protein (CRP).</text>
</comment>
<comment type="similarity">
    <text evidence="2">Belongs to the major facilitator superfamily. Set transporter family.</text>
</comment>
<accession>Q9S3K0</accession>
<evidence type="ECO:0000255" key="1"/>
<evidence type="ECO:0000305" key="2"/>
<keyword id="KW-0997">Cell inner membrane</keyword>
<keyword id="KW-1003">Cell membrane</keyword>
<keyword id="KW-0472">Membrane</keyword>
<keyword id="KW-0762">Sugar transport</keyword>
<keyword id="KW-0812">Transmembrane</keyword>
<keyword id="KW-1133">Transmembrane helix</keyword>
<keyword id="KW-0813">Transport</keyword>
<name>SOTA_DICCH</name>
<proteinExistence type="evidence at protein level"/>
<protein>
    <recommendedName>
        <fullName>Sugar efflux transporter A</fullName>
    </recommendedName>
</protein>